<proteinExistence type="evidence at protein level"/>
<accession>Q8NAX2</accession>
<accession>Q5QP32</accession>
<accession>Q8N0S7</accession>
<reference key="1">
    <citation type="journal article" date="2004" name="Nat. Genet.">
        <title>Complete sequencing and characterization of 21,243 full-length human cDNAs.</title>
        <authorList>
            <person name="Ota T."/>
            <person name="Suzuki Y."/>
            <person name="Nishikawa T."/>
            <person name="Otsuki T."/>
            <person name="Sugiyama T."/>
            <person name="Irie R."/>
            <person name="Wakamatsu A."/>
            <person name="Hayashi K."/>
            <person name="Sato H."/>
            <person name="Nagai K."/>
            <person name="Kimura K."/>
            <person name="Makita H."/>
            <person name="Sekine M."/>
            <person name="Obayashi M."/>
            <person name="Nishi T."/>
            <person name="Shibahara T."/>
            <person name="Tanaka T."/>
            <person name="Ishii S."/>
            <person name="Yamamoto J."/>
            <person name="Saito K."/>
            <person name="Kawai Y."/>
            <person name="Isono Y."/>
            <person name="Nakamura Y."/>
            <person name="Nagahari K."/>
            <person name="Murakami K."/>
            <person name="Yasuda T."/>
            <person name="Iwayanagi T."/>
            <person name="Wagatsuma M."/>
            <person name="Shiratori A."/>
            <person name="Sudo H."/>
            <person name="Hosoiri T."/>
            <person name="Kaku Y."/>
            <person name="Kodaira H."/>
            <person name="Kondo H."/>
            <person name="Sugawara M."/>
            <person name="Takahashi M."/>
            <person name="Kanda K."/>
            <person name="Yokoi T."/>
            <person name="Furuya T."/>
            <person name="Kikkawa E."/>
            <person name="Omura Y."/>
            <person name="Abe K."/>
            <person name="Kamihara K."/>
            <person name="Katsuta N."/>
            <person name="Sato K."/>
            <person name="Tanikawa M."/>
            <person name="Yamazaki M."/>
            <person name="Ninomiya K."/>
            <person name="Ishibashi T."/>
            <person name="Yamashita H."/>
            <person name="Murakawa K."/>
            <person name="Fujimori K."/>
            <person name="Tanai H."/>
            <person name="Kimata M."/>
            <person name="Watanabe M."/>
            <person name="Hiraoka S."/>
            <person name="Chiba Y."/>
            <person name="Ishida S."/>
            <person name="Ono Y."/>
            <person name="Takiguchi S."/>
            <person name="Watanabe S."/>
            <person name="Yosida M."/>
            <person name="Hotuta T."/>
            <person name="Kusano J."/>
            <person name="Kanehori K."/>
            <person name="Takahashi-Fujii A."/>
            <person name="Hara H."/>
            <person name="Tanase T.-O."/>
            <person name="Nomura Y."/>
            <person name="Togiya S."/>
            <person name="Komai F."/>
            <person name="Hara R."/>
            <person name="Takeuchi K."/>
            <person name="Arita M."/>
            <person name="Imose N."/>
            <person name="Musashino K."/>
            <person name="Yuuki H."/>
            <person name="Oshima A."/>
            <person name="Sasaki N."/>
            <person name="Aotsuka S."/>
            <person name="Yoshikawa Y."/>
            <person name="Matsunawa H."/>
            <person name="Ichihara T."/>
            <person name="Shiohata N."/>
            <person name="Sano S."/>
            <person name="Moriya S."/>
            <person name="Momiyama H."/>
            <person name="Satoh N."/>
            <person name="Takami S."/>
            <person name="Terashima Y."/>
            <person name="Suzuki O."/>
            <person name="Nakagawa S."/>
            <person name="Senoh A."/>
            <person name="Mizoguchi H."/>
            <person name="Goto Y."/>
            <person name="Shimizu F."/>
            <person name="Wakebe H."/>
            <person name="Hishigaki H."/>
            <person name="Watanabe T."/>
            <person name="Sugiyama A."/>
            <person name="Takemoto M."/>
            <person name="Kawakami B."/>
            <person name="Yamazaki M."/>
            <person name="Watanabe K."/>
            <person name="Kumagai A."/>
            <person name="Itakura S."/>
            <person name="Fukuzumi Y."/>
            <person name="Fujimori Y."/>
            <person name="Komiyama M."/>
            <person name="Tashiro H."/>
            <person name="Tanigami A."/>
            <person name="Fujiwara T."/>
            <person name="Ono T."/>
            <person name="Yamada K."/>
            <person name="Fujii Y."/>
            <person name="Ozaki K."/>
            <person name="Hirao M."/>
            <person name="Ohmori Y."/>
            <person name="Kawabata A."/>
            <person name="Hikiji T."/>
            <person name="Kobatake N."/>
            <person name="Inagaki H."/>
            <person name="Ikema Y."/>
            <person name="Okamoto S."/>
            <person name="Okitani R."/>
            <person name="Kawakami T."/>
            <person name="Noguchi S."/>
            <person name="Itoh T."/>
            <person name="Shigeta K."/>
            <person name="Senba T."/>
            <person name="Matsumura K."/>
            <person name="Nakajima Y."/>
            <person name="Mizuno T."/>
            <person name="Morinaga M."/>
            <person name="Sasaki M."/>
            <person name="Togashi T."/>
            <person name="Oyama M."/>
            <person name="Hata H."/>
            <person name="Watanabe M."/>
            <person name="Komatsu T."/>
            <person name="Mizushima-Sugano J."/>
            <person name="Satoh T."/>
            <person name="Shirai Y."/>
            <person name="Takahashi Y."/>
            <person name="Nakagawa K."/>
            <person name="Okumura K."/>
            <person name="Nagase T."/>
            <person name="Nomura N."/>
            <person name="Kikuchi H."/>
            <person name="Masuho Y."/>
            <person name="Yamashita R."/>
            <person name="Nakai K."/>
            <person name="Yada T."/>
            <person name="Nakamura Y."/>
            <person name="Ohara O."/>
            <person name="Isogai T."/>
            <person name="Sugano S."/>
        </authorList>
    </citation>
    <scope>NUCLEOTIDE SEQUENCE [LARGE SCALE MRNA]</scope>
    <source>
        <tissue>Kidney</tissue>
    </source>
</reference>
<reference key="2">
    <citation type="journal article" date="2006" name="Nature">
        <title>The DNA sequence and biological annotation of human chromosome 1.</title>
        <authorList>
            <person name="Gregory S.G."/>
            <person name="Barlow K.F."/>
            <person name="McLay K.E."/>
            <person name="Kaul R."/>
            <person name="Swarbreck D."/>
            <person name="Dunham A."/>
            <person name="Scott C.E."/>
            <person name="Howe K.L."/>
            <person name="Woodfine K."/>
            <person name="Spencer C.C.A."/>
            <person name="Jones M.C."/>
            <person name="Gillson C."/>
            <person name="Searle S."/>
            <person name="Zhou Y."/>
            <person name="Kokocinski F."/>
            <person name="McDonald L."/>
            <person name="Evans R."/>
            <person name="Phillips K."/>
            <person name="Atkinson A."/>
            <person name="Cooper R."/>
            <person name="Jones C."/>
            <person name="Hall R.E."/>
            <person name="Andrews T.D."/>
            <person name="Lloyd C."/>
            <person name="Ainscough R."/>
            <person name="Almeida J.P."/>
            <person name="Ambrose K.D."/>
            <person name="Anderson F."/>
            <person name="Andrew R.W."/>
            <person name="Ashwell R.I.S."/>
            <person name="Aubin K."/>
            <person name="Babbage A.K."/>
            <person name="Bagguley C.L."/>
            <person name="Bailey J."/>
            <person name="Beasley H."/>
            <person name="Bethel G."/>
            <person name="Bird C.P."/>
            <person name="Bray-Allen S."/>
            <person name="Brown J.Y."/>
            <person name="Brown A.J."/>
            <person name="Buckley D."/>
            <person name="Burton J."/>
            <person name="Bye J."/>
            <person name="Carder C."/>
            <person name="Chapman J.C."/>
            <person name="Clark S.Y."/>
            <person name="Clarke G."/>
            <person name="Clee C."/>
            <person name="Cobley V."/>
            <person name="Collier R.E."/>
            <person name="Corby N."/>
            <person name="Coville G.J."/>
            <person name="Davies J."/>
            <person name="Deadman R."/>
            <person name="Dunn M."/>
            <person name="Earthrowl M."/>
            <person name="Ellington A.G."/>
            <person name="Errington H."/>
            <person name="Frankish A."/>
            <person name="Frankland J."/>
            <person name="French L."/>
            <person name="Garner P."/>
            <person name="Garnett J."/>
            <person name="Gay L."/>
            <person name="Ghori M.R.J."/>
            <person name="Gibson R."/>
            <person name="Gilby L.M."/>
            <person name="Gillett W."/>
            <person name="Glithero R.J."/>
            <person name="Grafham D.V."/>
            <person name="Griffiths C."/>
            <person name="Griffiths-Jones S."/>
            <person name="Grocock R."/>
            <person name="Hammond S."/>
            <person name="Harrison E.S.I."/>
            <person name="Hart E."/>
            <person name="Haugen E."/>
            <person name="Heath P.D."/>
            <person name="Holmes S."/>
            <person name="Holt K."/>
            <person name="Howden P.J."/>
            <person name="Hunt A.R."/>
            <person name="Hunt S.E."/>
            <person name="Hunter G."/>
            <person name="Isherwood J."/>
            <person name="James R."/>
            <person name="Johnson C."/>
            <person name="Johnson D."/>
            <person name="Joy A."/>
            <person name="Kay M."/>
            <person name="Kershaw J.K."/>
            <person name="Kibukawa M."/>
            <person name="Kimberley A.M."/>
            <person name="King A."/>
            <person name="Knights A.J."/>
            <person name="Lad H."/>
            <person name="Laird G."/>
            <person name="Lawlor S."/>
            <person name="Leongamornlert D.A."/>
            <person name="Lloyd D.M."/>
            <person name="Loveland J."/>
            <person name="Lovell J."/>
            <person name="Lush M.J."/>
            <person name="Lyne R."/>
            <person name="Martin S."/>
            <person name="Mashreghi-Mohammadi M."/>
            <person name="Matthews L."/>
            <person name="Matthews N.S.W."/>
            <person name="McLaren S."/>
            <person name="Milne S."/>
            <person name="Mistry S."/>
            <person name="Moore M.J.F."/>
            <person name="Nickerson T."/>
            <person name="O'Dell C.N."/>
            <person name="Oliver K."/>
            <person name="Palmeiri A."/>
            <person name="Palmer S.A."/>
            <person name="Parker A."/>
            <person name="Patel D."/>
            <person name="Pearce A.V."/>
            <person name="Peck A.I."/>
            <person name="Pelan S."/>
            <person name="Phelps K."/>
            <person name="Phillimore B.J."/>
            <person name="Plumb R."/>
            <person name="Rajan J."/>
            <person name="Raymond C."/>
            <person name="Rouse G."/>
            <person name="Saenphimmachak C."/>
            <person name="Sehra H.K."/>
            <person name="Sheridan E."/>
            <person name="Shownkeen R."/>
            <person name="Sims S."/>
            <person name="Skuce C.D."/>
            <person name="Smith M."/>
            <person name="Steward C."/>
            <person name="Subramanian S."/>
            <person name="Sycamore N."/>
            <person name="Tracey A."/>
            <person name="Tromans A."/>
            <person name="Van Helmond Z."/>
            <person name="Wall M."/>
            <person name="Wallis J.M."/>
            <person name="White S."/>
            <person name="Whitehead S.L."/>
            <person name="Wilkinson J.E."/>
            <person name="Willey D.L."/>
            <person name="Williams H."/>
            <person name="Wilming L."/>
            <person name="Wray P.W."/>
            <person name="Wu Z."/>
            <person name="Coulson A."/>
            <person name="Vaudin M."/>
            <person name="Sulston J.E."/>
            <person name="Durbin R.M."/>
            <person name="Hubbard T."/>
            <person name="Wooster R."/>
            <person name="Dunham I."/>
            <person name="Carter N.P."/>
            <person name="McVean G."/>
            <person name="Ross M.T."/>
            <person name="Harrow J."/>
            <person name="Olson M.V."/>
            <person name="Beck S."/>
            <person name="Rogers J."/>
            <person name="Bentley D.R."/>
        </authorList>
    </citation>
    <scope>NUCLEOTIDE SEQUENCE [LARGE SCALE GENOMIC DNA]</scope>
</reference>
<reference key="3">
    <citation type="journal article" date="2004" name="Genome Res.">
        <title>The status, quality, and expansion of the NIH full-length cDNA project: the Mammalian Gene Collection (MGC).</title>
        <authorList>
            <consortium name="The MGC Project Team"/>
        </authorList>
    </citation>
    <scope>NUCLEOTIDE SEQUENCE [LARGE SCALE MRNA] OF 27-398</scope>
    <source>
        <tissue>Placenta</tissue>
    </source>
</reference>
<reference key="4">
    <citation type="journal article" date="2017" name="Hum. Genet.">
        <title>KDF1, encoding keratinocyte differentiation factor 1, is mutated in a multigenerational family with ectodermal dysplasia.</title>
        <authorList>
            <person name="Shamseldin H.E."/>
            <person name="Khalifa O."/>
            <person name="Binamer Y.M."/>
            <person name="Almutawa A."/>
            <person name="Arold S.T."/>
            <person name="Zaidan H."/>
            <person name="Alkuraya F.S."/>
        </authorList>
    </citation>
    <scope>POSSIBLE INVOLVEMENT IN ECTD12</scope>
    <scope>VARIANT ECTD12 LEU-251</scope>
</reference>
<reference key="5">
    <citation type="journal article" date="2006" name="Science">
        <title>The consensus coding sequences of human breast and colorectal cancers.</title>
        <authorList>
            <person name="Sjoeblom T."/>
            <person name="Jones S."/>
            <person name="Wood L.D."/>
            <person name="Parsons D.W."/>
            <person name="Lin J."/>
            <person name="Barber T.D."/>
            <person name="Mandelker D."/>
            <person name="Leary R.J."/>
            <person name="Ptak J."/>
            <person name="Silliman N."/>
            <person name="Szabo S."/>
            <person name="Buckhaults P."/>
            <person name="Farrell C."/>
            <person name="Meeh P."/>
            <person name="Markowitz S.D."/>
            <person name="Willis J."/>
            <person name="Dawson D."/>
            <person name="Willson J.K.V."/>
            <person name="Gazdar A.F."/>
            <person name="Hartigan J."/>
            <person name="Wu L."/>
            <person name="Liu C."/>
            <person name="Parmigiani G."/>
            <person name="Park B.H."/>
            <person name="Bachman K.E."/>
            <person name="Papadopoulos N."/>
            <person name="Vogelstein B."/>
            <person name="Kinzler K.W."/>
            <person name="Velculescu V.E."/>
        </authorList>
    </citation>
    <scope>VARIANT [LARGE SCALE ANALYSIS] HIS-312</scope>
</reference>
<organism>
    <name type="scientific">Homo sapiens</name>
    <name type="common">Human</name>
    <dbReference type="NCBI Taxonomy" id="9606"/>
    <lineage>
        <taxon>Eukaryota</taxon>
        <taxon>Metazoa</taxon>
        <taxon>Chordata</taxon>
        <taxon>Craniata</taxon>
        <taxon>Vertebrata</taxon>
        <taxon>Euteleostomi</taxon>
        <taxon>Mammalia</taxon>
        <taxon>Eutheria</taxon>
        <taxon>Euarchontoglires</taxon>
        <taxon>Primates</taxon>
        <taxon>Haplorrhini</taxon>
        <taxon>Catarrhini</taxon>
        <taxon>Hominidae</taxon>
        <taxon>Homo</taxon>
    </lineage>
</organism>
<protein>
    <recommendedName>
        <fullName>Keratinocyte differentiation factor 1</fullName>
    </recommendedName>
</protein>
<feature type="chain" id="PRO_0000289048" description="Keratinocyte differentiation factor 1">
    <location>
        <begin position="1"/>
        <end position="398"/>
    </location>
</feature>
<feature type="region of interest" description="Disordered" evidence="2">
    <location>
        <begin position="1"/>
        <end position="60"/>
    </location>
</feature>
<feature type="region of interest" description="Disordered" evidence="2">
    <location>
        <begin position="123"/>
        <end position="156"/>
    </location>
</feature>
<feature type="region of interest" description="Disordered" evidence="2">
    <location>
        <begin position="307"/>
        <end position="340"/>
    </location>
</feature>
<feature type="region of interest" description="Disordered" evidence="2">
    <location>
        <begin position="369"/>
        <end position="392"/>
    </location>
</feature>
<feature type="compositionally biased region" description="Basic and acidic residues" evidence="2">
    <location>
        <begin position="44"/>
        <end position="55"/>
    </location>
</feature>
<feature type="compositionally biased region" description="Polar residues" evidence="2">
    <location>
        <begin position="377"/>
        <end position="389"/>
    </location>
</feature>
<feature type="modified residue" description="Phosphoserine" evidence="1">
    <location>
        <position position="218"/>
    </location>
</feature>
<feature type="sequence variant" id="VAR_032561" description="In dbSNP:rs17360994.">
    <original>Q</original>
    <variation>R</variation>
    <location>
        <position position="100"/>
    </location>
</feature>
<feature type="sequence variant" id="VAR_032562" description="In dbSNP:rs3010109.">
    <original>R</original>
    <variation>W</variation>
    <location>
        <position position="107"/>
    </location>
</feature>
<feature type="sequence variant" id="VAR_032563" description="In dbSNP:rs34291506.">
    <original>K</original>
    <variation>R</variation>
    <location>
        <position position="189"/>
    </location>
</feature>
<feature type="sequence variant" id="VAR_078070" description="In ECTD12; uncertain significance; dbSNP:rs1057519508." evidence="4">
    <original>F</original>
    <variation>L</variation>
    <location>
        <position position="251"/>
    </location>
</feature>
<feature type="sequence variant" id="VAR_035616" description="In a colorectal cancer sample; somatic mutation; dbSNP:rs755094201." evidence="3">
    <original>R</original>
    <variation>H</variation>
    <location>
        <position position="312"/>
    </location>
</feature>
<feature type="sequence conflict" description="In Ref. 1; BAC03775." evidence="5" ref="1">
    <original>R</original>
    <variation>Q</variation>
    <location>
        <position position="150"/>
    </location>
</feature>
<comment type="function">
    <text evidence="1">Plays a role in the regulation of the epidermis formation during early development. Required both as an inhibitor of basal cell proliferation and a promoter of differentiation of basal progenitor cell progeny (By similarity).</text>
</comment>
<comment type="interaction">
    <interactant intactId="EBI-11997992">
        <id>Q8NAX2</id>
    </interactant>
    <interactant intactId="EBI-948603">
        <id>Q03989</id>
        <label>ARID5A</label>
    </interactant>
    <organismsDiffer>false</organismsDiffer>
    <experiments>3</experiments>
</comment>
<comment type="interaction">
    <interactant intactId="EBI-11997992">
        <id>Q8NAX2</id>
    </interactant>
    <interactant intactId="EBI-2548751">
        <id>Q8TD10</id>
        <label>MIPOL1</label>
    </interactant>
    <organismsDiffer>false</organismsDiffer>
    <experiments>3</experiments>
</comment>
<comment type="interaction">
    <interactant intactId="EBI-11997992">
        <id>Q8NAX2</id>
    </interactant>
    <interactant intactId="EBI-12029004">
        <id>P78424</id>
        <label>POU6F2</label>
    </interactant>
    <organismsDiffer>false</organismsDiffer>
    <experiments>3</experiments>
</comment>
<comment type="subcellular location">
    <subcellularLocation>
        <location evidence="1">Cytoplasm</location>
    </subcellularLocation>
    <subcellularLocation>
        <location evidence="1">Cell junction</location>
    </subcellularLocation>
    <text evidence="1">Localized at cell borders in single layered keratinocytes. Localized at cell borders in the basal and spinous layers but is more diffusely localized in the granular layer. Colocalized with actin near the cell membrane, especially in cellular protrusions (By similarity).</text>
</comment>
<comment type="disease" evidence="4">
    <disease id="DI-04948">
        <name>Ectodermal dysplasia 12, hypohidrotic/hair/tooth/nail type</name>
        <acronym>ECTD12</acronym>
        <description>A form of ectodermal dysplasia, a disorder due to abnormal development of two or more ectodermal structures. ECTD12 is an autosomal dominant, hypohidrotic form characterized by sparse hair (atrichosis or hypotrichosis), abnormal or missing teeth, and the inability to sweat due to defective development of sweat glands.</description>
        <dbReference type="MIM" id="617337"/>
    </disease>
    <text>The disease may be caused by variants affecting the gene represented in this entry.</text>
</comment>
<comment type="sequence caution" evidence="5">
    <conflict type="erroneous initiation">
        <sequence resource="EMBL-CDS" id="AAH33143"/>
    </conflict>
</comment>
<gene>
    <name type="primary">KDF1</name>
    <name type="synonym">C1orf172</name>
</gene>
<keyword id="KW-0965">Cell junction</keyword>
<keyword id="KW-0963">Cytoplasm</keyword>
<keyword id="KW-0217">Developmental protein</keyword>
<keyword id="KW-0221">Differentiation</keyword>
<keyword id="KW-0225">Disease variant</keyword>
<keyword id="KW-0038">Ectodermal dysplasia</keyword>
<keyword id="KW-0597">Phosphoprotein</keyword>
<keyword id="KW-1267">Proteomics identification</keyword>
<keyword id="KW-1185">Reference proteome</keyword>
<evidence type="ECO:0000250" key="1">
    <source>
        <dbReference type="UniProtKB" id="A2A9F4"/>
    </source>
</evidence>
<evidence type="ECO:0000256" key="2">
    <source>
        <dbReference type="SAM" id="MobiDB-lite"/>
    </source>
</evidence>
<evidence type="ECO:0000269" key="3">
    <source>
    </source>
</evidence>
<evidence type="ECO:0000269" key="4">
    <source>
    </source>
</evidence>
<evidence type="ECO:0000305" key="5"/>
<sequence>MPRPGHPRPASGPPRLGPWERPTELCLETYDKPPQPPPSRRTRRPDPKDPGHHGPESITFISGSAEPALESPTCCLLWRPWVWEWCRAAFCFRRCRDCLQRCGACVRGCSPCLSTEDSTEGTAEANWAKEHNGVPPSPDRAPPSRRDGQRLKSTMGSSFSYPDVKLKGIPVYPYPRATSPAPDADSCCKEPLADPPPMRHSLPSTFASSPRGSEEYYSFHESDLDLPEMGSGSMSSREIDVLIFKKLTELFSVHQIDELAKCTSDTVFLEKTSKISDLISSITQDYHLDEQDAEGRLVRGIIRISTRKSRARPQTSEGRSTRAAAPTAAAPDSGHETMVGSGLSQDELTVQISQETTADAIARKLRPYGAPGYPASHDSSFQGTDTDSSGAPLLQVYC</sequence>
<name>KDF1_HUMAN</name>
<dbReference type="EMBL" id="AK091952">
    <property type="protein sequence ID" value="BAC03775.1"/>
    <property type="molecule type" value="mRNA"/>
</dbReference>
<dbReference type="EMBL" id="AL356390">
    <property type="status" value="NOT_ANNOTATED_CDS"/>
    <property type="molecule type" value="Genomic_DNA"/>
</dbReference>
<dbReference type="EMBL" id="BC033143">
    <property type="protein sequence ID" value="AAH33143.1"/>
    <property type="status" value="ALT_INIT"/>
    <property type="molecule type" value="mRNA"/>
</dbReference>
<dbReference type="CCDS" id="CCDS293.1"/>
<dbReference type="RefSeq" id="NP_689578.2">
    <property type="nucleotide sequence ID" value="NM_152365.3"/>
</dbReference>
<dbReference type="RefSeq" id="XP_005245792.1">
    <property type="nucleotide sequence ID" value="XM_005245735.3"/>
</dbReference>
<dbReference type="RefSeq" id="XP_011538924.1">
    <property type="nucleotide sequence ID" value="XM_011540622.3"/>
</dbReference>
<dbReference type="RefSeq" id="XP_054190223.1">
    <property type="nucleotide sequence ID" value="XM_054334248.1"/>
</dbReference>
<dbReference type="RefSeq" id="XP_054190224.1">
    <property type="nucleotide sequence ID" value="XM_054334249.1"/>
</dbReference>
<dbReference type="BioGRID" id="126010">
    <property type="interactions" value="200"/>
</dbReference>
<dbReference type="FunCoup" id="Q8NAX2">
    <property type="interactions" value="107"/>
</dbReference>
<dbReference type="IntAct" id="Q8NAX2">
    <property type="interactions" value="11"/>
</dbReference>
<dbReference type="MINT" id="Q8NAX2"/>
<dbReference type="STRING" id="9606.ENSP00000319179"/>
<dbReference type="GlyGen" id="Q8NAX2">
    <property type="glycosylation" value="1 site"/>
</dbReference>
<dbReference type="iPTMnet" id="Q8NAX2"/>
<dbReference type="PhosphoSitePlus" id="Q8NAX2"/>
<dbReference type="SwissPalm" id="Q8NAX2"/>
<dbReference type="BioMuta" id="KDF1"/>
<dbReference type="DMDM" id="152125836"/>
<dbReference type="jPOST" id="Q8NAX2"/>
<dbReference type="MassIVE" id="Q8NAX2"/>
<dbReference type="PaxDb" id="9606-ENSP00000319179"/>
<dbReference type="PeptideAtlas" id="Q8NAX2"/>
<dbReference type="ProteomicsDB" id="72710"/>
<dbReference type="Antibodypedia" id="30716">
    <property type="antibodies" value="96 antibodies from 12 providers"/>
</dbReference>
<dbReference type="DNASU" id="126695"/>
<dbReference type="Ensembl" id="ENST00000320567.6">
    <property type="protein sequence ID" value="ENSP00000319179.5"/>
    <property type="gene ID" value="ENSG00000175707.10"/>
</dbReference>
<dbReference type="GeneID" id="126695"/>
<dbReference type="KEGG" id="hsa:126695"/>
<dbReference type="MANE-Select" id="ENST00000320567.6">
    <property type="protein sequence ID" value="ENSP00000319179.5"/>
    <property type="RefSeq nucleotide sequence ID" value="NM_152365.3"/>
    <property type="RefSeq protein sequence ID" value="NP_689578.2"/>
</dbReference>
<dbReference type="UCSC" id="uc001bni.3">
    <property type="organism name" value="human"/>
</dbReference>
<dbReference type="AGR" id="HGNC:26624"/>
<dbReference type="CTD" id="126695"/>
<dbReference type="DisGeNET" id="126695"/>
<dbReference type="GeneCards" id="KDF1"/>
<dbReference type="HGNC" id="HGNC:26624">
    <property type="gene designation" value="KDF1"/>
</dbReference>
<dbReference type="HPA" id="ENSG00000175707">
    <property type="expression patterns" value="Low tissue specificity"/>
</dbReference>
<dbReference type="MalaCards" id="KDF1"/>
<dbReference type="MIM" id="616758">
    <property type="type" value="gene"/>
</dbReference>
<dbReference type="MIM" id="617337">
    <property type="type" value="phenotype"/>
</dbReference>
<dbReference type="neXtProt" id="NX_Q8NAX2"/>
<dbReference type="OpenTargets" id="ENSG00000175707"/>
<dbReference type="Orphanet" id="1810">
    <property type="disease" value="Autosomal dominant hypohidrotic ectodermal dysplasia"/>
</dbReference>
<dbReference type="PharmGKB" id="PA142672421"/>
<dbReference type="VEuPathDB" id="HostDB:ENSG00000175707"/>
<dbReference type="eggNOG" id="ENOG502QQ0M">
    <property type="taxonomic scope" value="Eukaryota"/>
</dbReference>
<dbReference type="GeneTree" id="ENSGT00390000016565"/>
<dbReference type="HOGENOM" id="CLU_058054_2_0_1"/>
<dbReference type="InParanoid" id="Q8NAX2"/>
<dbReference type="OMA" id="WSKEHNG"/>
<dbReference type="OrthoDB" id="8640515at2759"/>
<dbReference type="PAN-GO" id="Q8NAX2">
    <property type="GO annotations" value="2 GO annotations based on evolutionary models"/>
</dbReference>
<dbReference type="PhylomeDB" id="Q8NAX2"/>
<dbReference type="TreeFam" id="TF336538"/>
<dbReference type="PathwayCommons" id="Q8NAX2"/>
<dbReference type="SignaLink" id="Q8NAX2"/>
<dbReference type="BioGRID-ORCS" id="126695">
    <property type="hits" value="24 hits in 1145 CRISPR screens"/>
</dbReference>
<dbReference type="GenomeRNAi" id="126695"/>
<dbReference type="Pharos" id="Q8NAX2">
    <property type="development level" value="Tbio"/>
</dbReference>
<dbReference type="PRO" id="PR:Q8NAX2"/>
<dbReference type="Proteomes" id="UP000005640">
    <property type="component" value="Chromosome 1"/>
</dbReference>
<dbReference type="RNAct" id="Q8NAX2">
    <property type="molecule type" value="protein"/>
</dbReference>
<dbReference type="Bgee" id="ENSG00000175707">
    <property type="expression patterns" value="Expressed in mucosa of transverse colon and 129 other cell types or tissues"/>
</dbReference>
<dbReference type="ExpressionAtlas" id="Q8NAX2">
    <property type="expression patterns" value="baseline and differential"/>
</dbReference>
<dbReference type="GO" id="GO:0070161">
    <property type="term" value="C:anchoring junction"/>
    <property type="evidence" value="ECO:0007669"/>
    <property type="project" value="UniProtKB-SubCell"/>
</dbReference>
<dbReference type="GO" id="GO:0005938">
    <property type="term" value="C:cell cortex"/>
    <property type="evidence" value="ECO:0007669"/>
    <property type="project" value="Ensembl"/>
</dbReference>
<dbReference type="GO" id="GO:0030054">
    <property type="term" value="C:cell junction"/>
    <property type="evidence" value="ECO:0000250"/>
    <property type="project" value="UniProtKB"/>
</dbReference>
<dbReference type="GO" id="GO:0031252">
    <property type="term" value="C:cell leading edge"/>
    <property type="evidence" value="ECO:0007669"/>
    <property type="project" value="Ensembl"/>
</dbReference>
<dbReference type="GO" id="GO:0005737">
    <property type="term" value="C:cytoplasm"/>
    <property type="evidence" value="ECO:0000250"/>
    <property type="project" value="UniProtKB"/>
</dbReference>
<dbReference type="GO" id="GO:0048589">
    <property type="term" value="P:developmental growth"/>
    <property type="evidence" value="ECO:0000250"/>
    <property type="project" value="UniProtKB"/>
</dbReference>
<dbReference type="GO" id="GO:0061436">
    <property type="term" value="P:establishment of skin barrier"/>
    <property type="evidence" value="ECO:0000250"/>
    <property type="project" value="UniProtKB"/>
</dbReference>
<dbReference type="GO" id="GO:0003334">
    <property type="term" value="P:keratinocyte development"/>
    <property type="evidence" value="ECO:0007669"/>
    <property type="project" value="Ensembl"/>
</dbReference>
<dbReference type="GO" id="GO:0043616">
    <property type="term" value="P:keratinocyte proliferation"/>
    <property type="evidence" value="ECO:0007669"/>
    <property type="project" value="Ensembl"/>
</dbReference>
<dbReference type="GO" id="GO:0060887">
    <property type="term" value="P:limb epidermis development"/>
    <property type="evidence" value="ECO:0000250"/>
    <property type="project" value="UniProtKB"/>
</dbReference>
<dbReference type="GO" id="GO:0016331">
    <property type="term" value="P:morphogenesis of embryonic epithelium"/>
    <property type="evidence" value="ECO:0000250"/>
    <property type="project" value="UniProtKB"/>
</dbReference>
<dbReference type="GO" id="GO:0010839">
    <property type="term" value="P:negative regulation of keratinocyte proliferation"/>
    <property type="evidence" value="ECO:0007669"/>
    <property type="project" value="Ensembl"/>
</dbReference>
<dbReference type="GO" id="GO:2000647">
    <property type="term" value="P:negative regulation of stem cell proliferation"/>
    <property type="evidence" value="ECO:0000250"/>
    <property type="project" value="UniProtKB"/>
</dbReference>
<dbReference type="GO" id="GO:0045606">
    <property type="term" value="P:positive regulation of epidermal cell differentiation"/>
    <property type="evidence" value="ECO:0000250"/>
    <property type="project" value="UniProtKB"/>
</dbReference>
<dbReference type="GO" id="GO:0016579">
    <property type="term" value="P:protein deubiquitination"/>
    <property type="evidence" value="ECO:0007669"/>
    <property type="project" value="Ensembl"/>
</dbReference>
<dbReference type="GO" id="GO:0050821">
    <property type="term" value="P:protein stabilization"/>
    <property type="evidence" value="ECO:0007669"/>
    <property type="project" value="Ensembl"/>
</dbReference>
<dbReference type="GO" id="GO:0010482">
    <property type="term" value="P:regulation of epidermal cell division"/>
    <property type="evidence" value="ECO:0000250"/>
    <property type="project" value="UniProtKB"/>
</dbReference>
<dbReference type="GO" id="GO:0072089">
    <property type="term" value="P:stem cell proliferation"/>
    <property type="evidence" value="ECO:0007669"/>
    <property type="project" value="Ensembl"/>
</dbReference>
<dbReference type="InterPro" id="IPR028003">
    <property type="entry name" value="KDF1"/>
</dbReference>
<dbReference type="PANTHER" id="PTHR35085">
    <property type="entry name" value="KERATINOCYTE DIFFERENTIATION FACTOR 1"/>
    <property type="match status" value="1"/>
</dbReference>
<dbReference type="PANTHER" id="PTHR35085:SF1">
    <property type="entry name" value="KERATINOCYTE DIFFERENTIATION FACTOR 1"/>
    <property type="match status" value="1"/>
</dbReference>
<dbReference type="Pfam" id="PF15551">
    <property type="entry name" value="DUF4656"/>
    <property type="match status" value="1"/>
</dbReference>